<protein>
    <recommendedName>
        <fullName evidence="1">Chaperone protein HtpG</fullName>
    </recommendedName>
    <alternativeName>
        <fullName evidence="1">Heat shock protein HtpG</fullName>
    </alternativeName>
    <alternativeName>
        <fullName evidence="1">High temperature protein G</fullName>
    </alternativeName>
</protein>
<name>HTPG_BORPA</name>
<gene>
    <name evidence="1" type="primary">htpG</name>
    <name type="ordered locus">BPP0496</name>
</gene>
<accession>Q7WC32</accession>
<organism>
    <name type="scientific">Bordetella parapertussis (strain 12822 / ATCC BAA-587 / NCTC 13253)</name>
    <dbReference type="NCBI Taxonomy" id="257311"/>
    <lineage>
        <taxon>Bacteria</taxon>
        <taxon>Pseudomonadati</taxon>
        <taxon>Pseudomonadota</taxon>
        <taxon>Betaproteobacteria</taxon>
        <taxon>Burkholderiales</taxon>
        <taxon>Alcaligenaceae</taxon>
        <taxon>Bordetella</taxon>
    </lineage>
</organism>
<proteinExistence type="inferred from homology"/>
<evidence type="ECO:0000255" key="1">
    <source>
        <dbReference type="HAMAP-Rule" id="MF_00505"/>
    </source>
</evidence>
<sequence>MSQTTTNSASETLGFQAEVKQLLHLMIHSLYSNKEIFLRELVSNASDACDKLRFEAIDQPGLLDGDGELAIRVDYDKAARTITISDNGIGLSRDEAVANLGTIARSGTREFFSQLTGDKQKDAQLIGQFGVGFYSSFIVADKVTVLSRRAGLAANEAIRWESDGQGEFSIAPAEKAGRGTDVVLHLRADEDELLNGWKLREILRRYSDHISLPIRMAKEDWDAEKGEQVKGDELETVNQANALWTRNKSDITDEQYREFYKTVSHDYDDPLAWTHNRVEGRSEYTQLLYVPRHAPFDLWDRDARRGVKLYVKRVFIMDDAEQLLPSYLRFVRGVIDSADLPLNVSREILQESRDVRAIREGSAKRVLSLLEDMAENKAEDYATFWTEFGQVLKEGTGEDAANRERIARLLCFASTHDGEQAQTVSFADYVGRMKDGQDKIYYVTADTFTAAANSPHLEIFRKKGIEVLLLSDRVDEWMLSYLREFDGKSLVSVAKGGLDLAELADEEEKKRQSEVAETFKPLVERLQQALAEQVKEVRVTQRLVDSPACVVVGQNELSPHLLRMLKAAGQEAPEVKPVLEINPDHALIARIRDASDAEFGDWAALLLDQALLAEGAQIADPAAFVKRLNGLLLKA</sequence>
<comment type="function">
    <text evidence="1">Molecular chaperone. Has ATPase activity.</text>
</comment>
<comment type="subunit">
    <text evidence="1">Homodimer.</text>
</comment>
<comment type="subcellular location">
    <subcellularLocation>
        <location evidence="1">Cytoplasm</location>
    </subcellularLocation>
</comment>
<comment type="similarity">
    <text evidence="1">Belongs to the heat shock protein 90 family.</text>
</comment>
<dbReference type="EMBL" id="BX640424">
    <property type="protein sequence ID" value="CAE36080.1"/>
    <property type="molecule type" value="Genomic_DNA"/>
</dbReference>
<dbReference type="RefSeq" id="WP_010927519.1">
    <property type="nucleotide sequence ID" value="NC_002928.3"/>
</dbReference>
<dbReference type="SMR" id="Q7WC32"/>
<dbReference type="GeneID" id="93202246"/>
<dbReference type="KEGG" id="bpa:BPP0496"/>
<dbReference type="HOGENOM" id="CLU_006684_3_0_4"/>
<dbReference type="Proteomes" id="UP000001421">
    <property type="component" value="Chromosome"/>
</dbReference>
<dbReference type="GO" id="GO:0005737">
    <property type="term" value="C:cytoplasm"/>
    <property type="evidence" value="ECO:0007669"/>
    <property type="project" value="UniProtKB-SubCell"/>
</dbReference>
<dbReference type="GO" id="GO:0005524">
    <property type="term" value="F:ATP binding"/>
    <property type="evidence" value="ECO:0007669"/>
    <property type="project" value="UniProtKB-UniRule"/>
</dbReference>
<dbReference type="GO" id="GO:0016887">
    <property type="term" value="F:ATP hydrolysis activity"/>
    <property type="evidence" value="ECO:0007669"/>
    <property type="project" value="InterPro"/>
</dbReference>
<dbReference type="GO" id="GO:0140662">
    <property type="term" value="F:ATP-dependent protein folding chaperone"/>
    <property type="evidence" value="ECO:0007669"/>
    <property type="project" value="InterPro"/>
</dbReference>
<dbReference type="GO" id="GO:0051082">
    <property type="term" value="F:unfolded protein binding"/>
    <property type="evidence" value="ECO:0007669"/>
    <property type="project" value="UniProtKB-UniRule"/>
</dbReference>
<dbReference type="CDD" id="cd16927">
    <property type="entry name" value="HATPase_Hsp90-like"/>
    <property type="match status" value="1"/>
</dbReference>
<dbReference type="FunFam" id="3.30.230.80:FF:000002">
    <property type="entry name" value="Molecular chaperone HtpG"/>
    <property type="match status" value="1"/>
</dbReference>
<dbReference type="FunFam" id="3.30.565.10:FF:000009">
    <property type="entry name" value="Molecular chaperone HtpG"/>
    <property type="match status" value="1"/>
</dbReference>
<dbReference type="Gene3D" id="3.30.230.80">
    <property type="match status" value="1"/>
</dbReference>
<dbReference type="Gene3D" id="3.40.50.11260">
    <property type="match status" value="1"/>
</dbReference>
<dbReference type="Gene3D" id="1.20.120.790">
    <property type="entry name" value="Heat shock protein 90, C-terminal domain"/>
    <property type="match status" value="1"/>
</dbReference>
<dbReference type="Gene3D" id="3.30.565.10">
    <property type="entry name" value="Histidine kinase-like ATPase, C-terminal domain"/>
    <property type="match status" value="1"/>
</dbReference>
<dbReference type="HAMAP" id="MF_00505">
    <property type="entry name" value="HSP90"/>
    <property type="match status" value="1"/>
</dbReference>
<dbReference type="InterPro" id="IPR036890">
    <property type="entry name" value="HATPase_C_sf"/>
</dbReference>
<dbReference type="InterPro" id="IPR019805">
    <property type="entry name" value="Heat_shock_protein_90_CS"/>
</dbReference>
<dbReference type="InterPro" id="IPR037196">
    <property type="entry name" value="HSP90_C"/>
</dbReference>
<dbReference type="InterPro" id="IPR001404">
    <property type="entry name" value="Hsp90_fam"/>
</dbReference>
<dbReference type="InterPro" id="IPR020575">
    <property type="entry name" value="Hsp90_N"/>
</dbReference>
<dbReference type="InterPro" id="IPR020568">
    <property type="entry name" value="Ribosomal_Su5_D2-typ_SF"/>
</dbReference>
<dbReference type="NCBIfam" id="NF003555">
    <property type="entry name" value="PRK05218.1"/>
    <property type="match status" value="1"/>
</dbReference>
<dbReference type="PANTHER" id="PTHR11528">
    <property type="entry name" value="HEAT SHOCK PROTEIN 90 FAMILY MEMBER"/>
    <property type="match status" value="1"/>
</dbReference>
<dbReference type="Pfam" id="PF13589">
    <property type="entry name" value="HATPase_c_3"/>
    <property type="match status" value="1"/>
</dbReference>
<dbReference type="Pfam" id="PF00183">
    <property type="entry name" value="HSP90"/>
    <property type="match status" value="1"/>
</dbReference>
<dbReference type="PIRSF" id="PIRSF002583">
    <property type="entry name" value="Hsp90"/>
    <property type="match status" value="1"/>
</dbReference>
<dbReference type="PRINTS" id="PR00775">
    <property type="entry name" value="HEATSHOCK90"/>
</dbReference>
<dbReference type="SMART" id="SM00387">
    <property type="entry name" value="HATPase_c"/>
    <property type="match status" value="1"/>
</dbReference>
<dbReference type="SUPFAM" id="SSF55874">
    <property type="entry name" value="ATPase domain of HSP90 chaperone/DNA topoisomerase II/histidine kinase"/>
    <property type="match status" value="1"/>
</dbReference>
<dbReference type="SUPFAM" id="SSF110942">
    <property type="entry name" value="HSP90 C-terminal domain"/>
    <property type="match status" value="1"/>
</dbReference>
<dbReference type="SUPFAM" id="SSF54211">
    <property type="entry name" value="Ribosomal protein S5 domain 2-like"/>
    <property type="match status" value="1"/>
</dbReference>
<dbReference type="PROSITE" id="PS00298">
    <property type="entry name" value="HSP90"/>
    <property type="match status" value="1"/>
</dbReference>
<feature type="chain" id="PRO_0000062972" description="Chaperone protein HtpG">
    <location>
        <begin position="1"/>
        <end position="635"/>
    </location>
</feature>
<feature type="region of interest" description="A; substrate-binding" evidence="1">
    <location>
        <begin position="1"/>
        <end position="346"/>
    </location>
</feature>
<feature type="region of interest" description="B" evidence="1">
    <location>
        <begin position="347"/>
        <end position="563"/>
    </location>
</feature>
<feature type="region of interest" description="C" evidence="1">
    <location>
        <begin position="564"/>
        <end position="635"/>
    </location>
</feature>
<keyword id="KW-0067">ATP-binding</keyword>
<keyword id="KW-0143">Chaperone</keyword>
<keyword id="KW-0963">Cytoplasm</keyword>
<keyword id="KW-0547">Nucleotide-binding</keyword>
<keyword id="KW-0346">Stress response</keyword>
<reference key="1">
    <citation type="journal article" date="2003" name="Nat. Genet.">
        <title>Comparative analysis of the genome sequences of Bordetella pertussis, Bordetella parapertussis and Bordetella bronchiseptica.</title>
        <authorList>
            <person name="Parkhill J."/>
            <person name="Sebaihia M."/>
            <person name="Preston A."/>
            <person name="Murphy L.D."/>
            <person name="Thomson N.R."/>
            <person name="Harris D.E."/>
            <person name="Holden M.T.G."/>
            <person name="Churcher C.M."/>
            <person name="Bentley S.D."/>
            <person name="Mungall K.L."/>
            <person name="Cerdeno-Tarraga A.-M."/>
            <person name="Temple L."/>
            <person name="James K.D."/>
            <person name="Harris B."/>
            <person name="Quail M.A."/>
            <person name="Achtman M."/>
            <person name="Atkin R."/>
            <person name="Baker S."/>
            <person name="Basham D."/>
            <person name="Bason N."/>
            <person name="Cherevach I."/>
            <person name="Chillingworth T."/>
            <person name="Collins M."/>
            <person name="Cronin A."/>
            <person name="Davis P."/>
            <person name="Doggett J."/>
            <person name="Feltwell T."/>
            <person name="Goble A."/>
            <person name="Hamlin N."/>
            <person name="Hauser H."/>
            <person name="Holroyd S."/>
            <person name="Jagels K."/>
            <person name="Leather S."/>
            <person name="Moule S."/>
            <person name="Norberczak H."/>
            <person name="O'Neil S."/>
            <person name="Ormond D."/>
            <person name="Price C."/>
            <person name="Rabbinowitsch E."/>
            <person name="Rutter S."/>
            <person name="Sanders M."/>
            <person name="Saunders D."/>
            <person name="Seeger K."/>
            <person name="Sharp S."/>
            <person name="Simmonds M."/>
            <person name="Skelton J."/>
            <person name="Squares R."/>
            <person name="Squares S."/>
            <person name="Stevens K."/>
            <person name="Unwin L."/>
            <person name="Whitehead S."/>
            <person name="Barrell B.G."/>
            <person name="Maskell D.J."/>
        </authorList>
    </citation>
    <scope>NUCLEOTIDE SEQUENCE [LARGE SCALE GENOMIC DNA]</scope>
    <source>
        <strain>12822 / ATCC BAA-587 / NCTC 13253</strain>
    </source>
</reference>